<feature type="initiator methionine" description="Removed" evidence="7">
    <location>
        <position position="1"/>
    </location>
</feature>
<feature type="chain" id="PRO_0000444920" description="Botulinum neurotoxin type E">
    <location>
        <begin position="2"/>
        <end position="1251"/>
    </location>
</feature>
<feature type="chain" id="PRO_0000029223" description="Botulinum neurotoxin E light chain">
    <location>
        <begin position="2"/>
        <end position="422"/>
    </location>
</feature>
<feature type="chain" id="PRO_0000029224" description="Botulinum neurotoxin E heavy chain">
    <location>
        <begin position="423"/>
        <end position="1251"/>
    </location>
</feature>
<feature type="region of interest" description="Translocation domain (TD)" evidence="2">
    <location>
        <begin position="423"/>
        <end position="819"/>
    </location>
</feature>
<feature type="region of interest" description="Belt" evidence="2">
    <location>
        <begin position="466"/>
        <end position="515"/>
    </location>
</feature>
<feature type="region of interest" description="N-terminus of receptor binding domain (N-RBD)" evidence="1">
    <location>
        <begin position="845"/>
        <end position="1067"/>
    </location>
</feature>
<feature type="region of interest" description="C-terminus of receptor binding domain (C-RBD)" evidence="1">
    <location>
        <begin position="1068"/>
        <end position="1251"/>
    </location>
</feature>
<feature type="short sequence motif" description="Host ganglioside-binding motif" evidence="1">
    <location>
        <begin position="1221"/>
        <end position="1224"/>
    </location>
</feature>
<feature type="active site" evidence="3">
    <location>
        <position position="213"/>
    </location>
</feature>
<feature type="binding site" evidence="3">
    <location>
        <position position="212"/>
    </location>
    <ligand>
        <name>Zn(2+)</name>
        <dbReference type="ChEBI" id="CHEBI:29105"/>
        <note>catalytic</note>
    </ligand>
</feature>
<feature type="binding site" evidence="3">
    <location>
        <position position="216"/>
    </location>
    <ligand>
        <name>Zn(2+)</name>
        <dbReference type="ChEBI" id="CHEBI:29105"/>
        <note>catalytic</note>
    </ligand>
</feature>
<feature type="binding site" evidence="2">
    <location>
        <position position="251"/>
    </location>
    <ligand>
        <name>Zn(2+)</name>
        <dbReference type="ChEBI" id="CHEBI:29105"/>
        <note>catalytic</note>
    </ligand>
</feature>
<feature type="disulfide bond" description="Interchain (between light and heavy chains)" evidence="1 8">
    <location>
        <begin position="412"/>
        <end position="426"/>
    </location>
</feature>
<feature type="mutagenesis site" description="Wild-type binding of heavy chain to ganglioside GD1a." evidence="6">
    <original>K</original>
    <variation>A</variation>
    <variation>R</variation>
    <location>
        <position position="1093"/>
    </location>
</feature>
<feature type="mutagenesis site" description="Loss of heavy chain binding to ganglioside GD1a." evidence="6">
    <original>K</original>
    <variation>A</variation>
    <location>
        <position position="1214"/>
    </location>
</feature>
<feature type="mutagenesis site" description="Significant decrease in heavy chain binding to ganglioside GD1a." evidence="6">
    <original>K</original>
    <variation>H</variation>
    <location>
        <position position="1214"/>
    </location>
</feature>
<feature type="mutagenesis site" description="Wild-type binding of heavy chain to ganglioside GD1a." evidence="6">
    <original>R</original>
    <variation>A</variation>
    <location>
        <position position="1229"/>
    </location>
</feature>
<feature type="sequence conflict" description="In Ref. 2; CAA37321." evidence="8" ref="2">
    <original>K</original>
    <variation>M</variation>
    <location>
        <position position="230"/>
    </location>
</feature>
<protein>
    <recommendedName>
        <fullName>Botulinum neurotoxin type E</fullName>
        <shortName>BoNT/E</shortName>
    </recommendedName>
    <alternativeName>
        <fullName>Bontoxilysin-E</fullName>
    </alternativeName>
    <component>
        <recommendedName>
            <fullName>Botulinum neurotoxin E light chain</fullName>
            <shortName>LC</shortName>
            <ecNumber>3.4.24.69</ecNumber>
        </recommendedName>
    </component>
    <component>
        <recommendedName>
            <fullName>Botulinum neurotoxin E heavy chain</fullName>
            <shortName>HC</shortName>
        </recommendedName>
    </component>
</protein>
<reference key="1">
    <citation type="journal article" date="1992" name="Biochem. Biophys. Res. Commun.">
        <title>Sequences of the botulinal neurotoxin E derived from Clostridium botulinum type E (strain Beluga) and Clostridium butyricum (strains ATCC 43181 and ATCC 43755).</title>
        <authorList>
            <person name="Poulet S."/>
            <person name="Hauser D."/>
            <person name="Quanz M."/>
            <person name="Niemann H."/>
            <person name="Popoff M.R."/>
        </authorList>
    </citation>
    <scope>NUCLEOTIDE SEQUENCE [GENOMIC DNA]</scope>
    <source>
        <strain>ATCC 43181</strain>
        <strain>ATCC 43755</strain>
    </source>
</reference>
<reference key="2">
    <citation type="journal article" date="1991" name="J. Gen. Microbiol.">
        <title>Cloning of a DNA fragment encoding the 5'-terminus of the botulinum type E toxin gene from Clostridium butyricum strain BL6340.</title>
        <authorList>
            <person name="Fujii N."/>
            <person name="Kimura K."/>
            <person name="Murakami T."/>
            <person name="Indoh T."/>
            <person name="Tsuzuki K."/>
            <person name="Yokosawa N."/>
            <person name="Yashiki T."/>
            <person name="Oguma K."/>
        </authorList>
    </citation>
    <scope>NUCLEOTIDE SEQUENCE [GENOMIC DNA] OF 1-252</scope>
    <source>
        <strain>BL6340</strain>
    </source>
</reference>
<reference key="3">
    <citation type="journal article" date="1988" name="FASEB J.">
        <title>Neurotoxin type E from Clostridium botulinum and C. butyricum; partial sequence and comparison.</title>
        <authorList>
            <person name="Gimenez J."/>
            <person name="Foley J."/>
            <person name="Dasgupta B.R."/>
        </authorList>
    </citation>
    <scope>PROTEIN SEQUENCE OF 2-49</scope>
    <source>
        <strain>5262</strain>
    </source>
</reference>
<reference key="4">
    <citation type="journal article" date="2011" name="J. Biol. Chem.">
        <title>Unique ganglioside recognition strategies for clostridial neurotoxins.</title>
        <authorList>
            <person name="Benson M.A."/>
            <person name="Fu Z."/>
            <person name="Kim J.J."/>
            <person name="Baldwin M.R."/>
        </authorList>
    </citation>
    <scope>FUNCTION (BOTULINUM NEUROTOXIN E HEAVY CHAIN)</scope>
    <scope>GANGLIOSIDE-BINDING</scope>
    <scope>MUTAGENESIS OF LYS-1093; LYS-1214 AND ARG-1229</scope>
    <source>
        <strain>ATCC 43181</strain>
        <strain>ATCC 43755</strain>
    </source>
</reference>
<name>BXE_CLOBU</name>
<accession>P30995</accession>
<dbReference type="EC" id="3.4.24.69"/>
<dbReference type="EMBL" id="X62088">
    <property type="protein sequence ID" value="CAA43998.1"/>
    <property type="molecule type" value="Genomic_DNA"/>
</dbReference>
<dbReference type="EMBL" id="X53180">
    <property type="protein sequence ID" value="CAA37321.1"/>
    <property type="molecule type" value="Genomic_DNA"/>
</dbReference>
<dbReference type="PIR" id="JH0256">
    <property type="entry name" value="JH0256"/>
</dbReference>
<dbReference type="SMR" id="P30995"/>
<dbReference type="GO" id="GO:0005576">
    <property type="term" value="C:extracellular region"/>
    <property type="evidence" value="ECO:0007669"/>
    <property type="project" value="UniProtKB-SubCell"/>
</dbReference>
<dbReference type="GO" id="GO:0044161">
    <property type="term" value="C:host cell cytoplasmic vesicle"/>
    <property type="evidence" value="ECO:0007669"/>
    <property type="project" value="UniProtKB-SubCell"/>
</dbReference>
<dbReference type="GO" id="GO:0044164">
    <property type="term" value="C:host cell cytosol"/>
    <property type="evidence" value="ECO:0007669"/>
    <property type="project" value="UniProtKB-SubCell"/>
</dbReference>
<dbReference type="GO" id="GO:0020002">
    <property type="term" value="C:host cell plasma membrane"/>
    <property type="evidence" value="ECO:0007669"/>
    <property type="project" value="UniProtKB-KW"/>
</dbReference>
<dbReference type="GO" id="GO:0044231">
    <property type="term" value="C:host cell presynaptic membrane"/>
    <property type="evidence" value="ECO:0007669"/>
    <property type="project" value="UniProtKB-SubCell"/>
</dbReference>
<dbReference type="GO" id="GO:0016020">
    <property type="term" value="C:membrane"/>
    <property type="evidence" value="ECO:0007669"/>
    <property type="project" value="UniProtKB-KW"/>
</dbReference>
<dbReference type="GO" id="GO:0008289">
    <property type="term" value="F:lipid binding"/>
    <property type="evidence" value="ECO:0007669"/>
    <property type="project" value="UniProtKB-KW"/>
</dbReference>
<dbReference type="GO" id="GO:0004222">
    <property type="term" value="F:metalloendopeptidase activity"/>
    <property type="evidence" value="ECO:0007669"/>
    <property type="project" value="UniProtKB-EC"/>
</dbReference>
<dbReference type="GO" id="GO:0008320">
    <property type="term" value="F:protein transmembrane transporter activity"/>
    <property type="evidence" value="ECO:0007669"/>
    <property type="project" value="InterPro"/>
</dbReference>
<dbReference type="GO" id="GO:0090729">
    <property type="term" value="F:toxin activity"/>
    <property type="evidence" value="ECO:0007669"/>
    <property type="project" value="UniProtKB-KW"/>
</dbReference>
<dbReference type="GO" id="GO:0008270">
    <property type="term" value="F:zinc ion binding"/>
    <property type="evidence" value="ECO:0007669"/>
    <property type="project" value="InterPro"/>
</dbReference>
<dbReference type="GO" id="GO:0006508">
    <property type="term" value="P:proteolysis"/>
    <property type="evidence" value="ECO:0007669"/>
    <property type="project" value="UniProtKB-KW"/>
</dbReference>
<dbReference type="GO" id="GO:0141157">
    <property type="term" value="P:symbiont-mediated suppression of host exocytosis"/>
    <property type="evidence" value="ECO:0000269"/>
    <property type="project" value="SigSci"/>
</dbReference>
<dbReference type="CDD" id="cd23392">
    <property type="entry name" value="Toxin_R_bind_C_BoNTE"/>
    <property type="match status" value="1"/>
</dbReference>
<dbReference type="FunFam" id="2.60.120.200:FF:000184">
    <property type="entry name" value="Botulinum neurotoxin type A"/>
    <property type="match status" value="1"/>
</dbReference>
<dbReference type="FunFam" id="3.90.1240.10:FF:000001">
    <property type="entry name" value="Botulinum neurotoxin type B"/>
    <property type="match status" value="1"/>
</dbReference>
<dbReference type="Gene3D" id="2.60.120.200">
    <property type="match status" value="1"/>
</dbReference>
<dbReference type="Gene3D" id="2.80.10.50">
    <property type="match status" value="1"/>
</dbReference>
<dbReference type="Gene3D" id="1.20.1120.10">
    <property type="entry name" value="Clostridium botulinum neurotoxin b, 'coiled-coil' domain"/>
    <property type="match status" value="1"/>
</dbReference>
<dbReference type="Gene3D" id="3.90.1240.10">
    <property type="entry name" value="Metalloproteases ('zincins'), catalytic domain like"/>
    <property type="match status" value="1"/>
</dbReference>
<dbReference type="InterPro" id="IPR000395">
    <property type="entry name" value="Bot/tetX_LC"/>
</dbReference>
<dbReference type="InterPro" id="IPR036248">
    <property type="entry name" value="Clostridium_toxin_transloc"/>
</dbReference>
<dbReference type="InterPro" id="IPR013320">
    <property type="entry name" value="ConA-like_dom_sf"/>
</dbReference>
<dbReference type="InterPro" id="IPR011065">
    <property type="entry name" value="Kunitz_inhibitor_STI-like_sf"/>
</dbReference>
<dbReference type="InterPro" id="IPR013104">
    <property type="entry name" value="Toxin_rcpt-bd_C"/>
</dbReference>
<dbReference type="InterPro" id="IPR012928">
    <property type="entry name" value="Toxin_rcpt-bd_N"/>
</dbReference>
<dbReference type="InterPro" id="IPR012500">
    <property type="entry name" value="Toxin_trans"/>
</dbReference>
<dbReference type="Pfam" id="PF01742">
    <property type="entry name" value="Peptidase_M27"/>
    <property type="match status" value="1"/>
</dbReference>
<dbReference type="Pfam" id="PF07951">
    <property type="entry name" value="Toxin_R_bind_C"/>
    <property type="match status" value="1"/>
</dbReference>
<dbReference type="Pfam" id="PF07953">
    <property type="entry name" value="Toxin_R_bind_N"/>
    <property type="match status" value="1"/>
</dbReference>
<dbReference type="Pfam" id="PF07952">
    <property type="entry name" value="Toxin_trans"/>
    <property type="match status" value="1"/>
</dbReference>
<dbReference type="PRINTS" id="PR00760">
    <property type="entry name" value="BONTOXILYSIN"/>
</dbReference>
<dbReference type="SUPFAM" id="SSF58091">
    <property type="entry name" value="Clostridium neurotoxins, 'coiled-coil' domain"/>
    <property type="match status" value="1"/>
</dbReference>
<dbReference type="SUPFAM" id="SSF49899">
    <property type="entry name" value="Concanavalin A-like lectins/glucanases"/>
    <property type="match status" value="1"/>
</dbReference>
<dbReference type="SUPFAM" id="SSF55486">
    <property type="entry name" value="Metalloproteases ('zincins'), catalytic domain"/>
    <property type="match status" value="1"/>
</dbReference>
<dbReference type="SUPFAM" id="SSF50386">
    <property type="entry name" value="STI-like"/>
    <property type="match status" value="1"/>
</dbReference>
<dbReference type="PROSITE" id="PS00142">
    <property type="entry name" value="ZINC_PROTEASE"/>
    <property type="match status" value="1"/>
</dbReference>
<organism>
    <name type="scientific">Clostridium butyricum</name>
    <dbReference type="NCBI Taxonomy" id="1492"/>
    <lineage>
        <taxon>Bacteria</taxon>
        <taxon>Bacillati</taxon>
        <taxon>Bacillota</taxon>
        <taxon>Clostridia</taxon>
        <taxon>Eubacteriales</taxon>
        <taxon>Clostridiaceae</taxon>
        <taxon>Clostridium</taxon>
    </lineage>
</organism>
<keyword id="KW-0903">Direct protein sequencing</keyword>
<keyword id="KW-1015">Disulfide bond</keyword>
<keyword id="KW-1032">Host cell membrane</keyword>
<keyword id="KW-1035">Host cytoplasm</keyword>
<keyword id="KW-1036">Host cytoplasmic vesicle</keyword>
<keyword id="KW-1043">Host membrane</keyword>
<keyword id="KW-1051">Host synapse</keyword>
<keyword id="KW-0378">Hydrolase</keyword>
<keyword id="KW-0446">Lipid-binding</keyword>
<keyword id="KW-0472">Membrane</keyword>
<keyword id="KW-0479">Metal-binding</keyword>
<keyword id="KW-0482">Metalloprotease</keyword>
<keyword id="KW-0528">Neurotoxin</keyword>
<keyword id="KW-0645">Protease</keyword>
<keyword id="KW-0964">Secreted</keyword>
<keyword id="KW-0800">Toxin</keyword>
<keyword id="KW-0812">Transmembrane</keyword>
<keyword id="KW-0843">Virulence</keyword>
<keyword id="KW-0862">Zinc</keyword>
<evidence type="ECO:0000250" key="1">
    <source>
        <dbReference type="UniProtKB" id="P0DPI0"/>
    </source>
</evidence>
<evidence type="ECO:0000250" key="2">
    <source>
        <dbReference type="UniProtKB" id="Q00496"/>
    </source>
</evidence>
<evidence type="ECO:0000255" key="3">
    <source>
        <dbReference type="PROSITE-ProRule" id="PRU10095"/>
    </source>
</evidence>
<evidence type="ECO:0000269" key="4">
    <source>
    </source>
</evidence>
<evidence type="ECO:0000269" key="5">
    <source>
    </source>
</evidence>
<evidence type="ECO:0000269" key="6">
    <source>
    </source>
</evidence>
<evidence type="ECO:0000269" key="7">
    <source ref="3"/>
</evidence>
<evidence type="ECO:0000305" key="8"/>
<sequence length="1251" mass="143397">MPTINSFNYNDPVNNRTILYIKPGGCQQFYKSFNIMKNIWIIPERNVIGTIPQDFLPPTSLKNGDSSYYDPNYLQSDQEKDKFLKIVTKIFNRINDNLSGRILLEELSKANPYLGNDNTPDGDFIINDASAVPIQFSNGSQSILLPNVIIMGAEPDLFETNSSNISLRNNYMPSNHGFGSIAIVTFSPEYSFRFKDNSMNEFIQDPALTLMHELIHSLHGLYGAKGITTKYTITQKQNPLITNIRGTNIEEFLTFGGTDLNIITSAQSNDIYTNLLADYKKIASKLSKVQVSNPLLNPYKDVFEAKYGLDKDASGIYSVNINKFNDIFKKLYSFTEFDLATKFQVKCRQTYIGQYKYFKLSNLLNDSIYNISEGYNINNLKVNFRGQNANLNPRIITPITGRGLVKKIIRFCKNIVSVKGIRKSICIEINNGELFFVASENSYNDDNINTPKEIDDTVTSNNNYENDLDQVILNFNSESAPGLSDEKLNLTIQNDAYIPKYDSNGTSDIEQHDVNELNVFFYLDAQKVPEGENNVNLTSSIDTALLEQPKIYTFFSSEFINNVNKPVQAALFVGWIQQVLVDFTTEANQKSTVDKIADISIVVPYIGLALNIGNEAQKGNFKDALELLGAGILLEFEPELLIPTILVFTIKSFLGSSDNKNKVIKAINNALKERDEKWKEVYSFIVSNWMTKINTQFNKRKEQMYQALQNQVNALKAIIESKYNSYTLEEKNELTNKYDIEQIENELNQKVSIAMNNIDRFLTESSISYLMKLINEVKINKLREYDENVKTYLLDYIIKHGSILGESQQELNSMVIDTLNNSIPFKLSSYTDDKILISYFNKFFKRIKSSSVLNMRYKNDKYVDTSGYDSNININGDVYKYPTNKNQFGIYNDKLSEVNISQNDYIIYDNKYKNFSISFWVRIPNYDNKIVNVNNEYTIINCMRDNNSGWKVSLNHNEIIWTLQDNSGINQKLAFNYGNANGISDYINKWIFVTITNDRLGDSKLYINGNLIDKKSILNLGNIHVSDNILFKIVNCSYTRYIGIRYFNIFDKELDETEIQTLYNNEPNANILKDFWGNYLLYDKEYYLLNVLKPNNFINRRTDSTLSINNIRSTILLANRLYSGIKVKIQRVNNSSTNDNLVRKNDQVYINFVASKTHLLPLYADTATTNKEKTIKISSSGNRFNQVVVMNSVGNCTMNFKNNNGNNIGLLGFKADTVVASTWYYTHMRDNTNSNGFFWNFISEEHGWQEK</sequence>
<proteinExistence type="evidence at protein level"/>
<comment type="function">
    <molecule>Botulinum neurotoxin type E</molecule>
    <text evidence="2">Botulinum toxin causes flaccid paralysis by inhibiting neurotransmitter (acetylcholine) release from the presynaptic membranes of nerve terminals of eukaryotic host skeletal and autonomic nervous system, with frequent heart or respiratory failure. Precursor of botulinum neurotoxin E which has 2 coreceptors; complex polysialylated gangliosides found on neural tissue and specific membrane-anchored proteins found in synaptic vesicles. Receptor proteins are exposed on host presynaptic cell membrane during neurotransmitter release, when the toxin heavy chain (HC) binds to them. Upon synaptic vesicle recycling the toxin is taken up via the endocytic pathway. When the pH of the toxin-containing endosome drops a structural rearrangement occurs so that the N-terminus of the HC forms pores that allows the light chain (LC) to translocate into the cytosol. Once in the cytosol the disulfide bond linking the 2 subunits is reduced and LC cleaves its target protein on synaptic vesicles, preventing their fusion with the cytoplasmic membrane and thus neurotransmitter release (By similarity).</text>
</comment>
<comment type="function">
    <molecule>Botulinum neurotoxin E light chain</molecule>
    <text evidence="2">Has proteolytic activity. After translocation into the eukaryotic host cytosol, LC hydrolyzes the '180-Arg-|-Ile-181' bond in SNAP25, blocking neurotransmitter release (By similarity).</text>
</comment>
<comment type="function">
    <molecule>Botulinum neurotoxin E heavy chain</molecule>
    <text evidence="2 6">Responsible for host epithelial cell transcytosis, host nerve cell targeting and translocation of light chain (LC) into host cytosol. Composed of 3 subdomains; the translocation domain (TD), and N-terminus and C-terminus of the receptor-binding domain (RBD). The RBD is responsible for the adherence of the toxin to the cell surface. It simultaneously recognizes 2 coreceptors; host polysialated gangliosides and the receptor proteins SV2A and SV2B in close proximity on host synaptic vesicles. Interaction with SV2 proteins requires SV2 glycosylation. The N-terminus of the TD wraps an extended belt around the perimeter of the LC, protecting Zn(2+) in the active site; it may also prevent premature LC dissociation from the translocation channel and protect toxin prior to translocation (By similarity). The TD inserts into synaptic vesicle membrane to allow translocation into the host cytosol (By similarity). Binds ganglioside GD1a in vitro (PubMed:21849494).</text>
</comment>
<comment type="catalytic activity">
    <reaction evidence="2">
        <text>Limited hydrolysis of proteins of the neuroexocytosis apparatus, synaptobrevins, SNAP25 or syntaxin. No detected action on small molecule substrates.</text>
        <dbReference type="EC" id="3.4.24.69"/>
    </reaction>
</comment>
<comment type="cofactor">
    <cofactor evidence="2">
        <name>Zn(2+)</name>
        <dbReference type="ChEBI" id="CHEBI:29105"/>
    </cofactor>
    <text evidence="2">Binds 1 zinc ion per subunit (By similarity).</text>
</comment>
<comment type="subunit">
    <text evidence="2">Heterodimer; disulfide-linked heterodimer of a light chain (LC) and a heavy chain (HC). The LC has the proteolytic/pharmacological activity, while the N- and C-terminal of the HC mediate channel formation and toxin binding, respectively. Interacts with host synaptic vesicle glycoproteins SV2A and SV2B which probably serve as coreceptors.</text>
</comment>
<comment type="subcellular location">
    <molecule>Botulinum neurotoxin type E</molecule>
    <subcellularLocation>
        <location evidence="2">Secreted</location>
    </subcellularLocation>
</comment>
<comment type="subcellular location">
    <molecule>Botulinum neurotoxin E light chain</molecule>
    <subcellularLocation>
        <location>Secreted</location>
    </subcellularLocation>
    <subcellularLocation>
        <location evidence="2">Host cytoplasm</location>
        <location evidence="2">Host cytosol</location>
    </subcellularLocation>
</comment>
<comment type="subcellular location">
    <molecule>Botulinum neurotoxin E heavy chain</molecule>
    <subcellularLocation>
        <location>Secreted</location>
    </subcellularLocation>
    <subcellularLocation>
        <location evidence="2">Host synapse</location>
        <location evidence="2">Host presynaptic cell membrane</location>
    </subcellularLocation>
    <subcellularLocation>
        <location evidence="1">Host cytoplasmic vesicle</location>
        <location evidence="1">Host secretory vesicle</location>
        <location evidence="1">Host synaptic vesicle membrane</location>
        <topology evidence="8">Multi-pass membrane protein</topology>
    </subcellularLocation>
</comment>
<comment type="domain">
    <molecule>Botulinum neurotoxin E light chain</molecule>
    <text evidence="2">Has protease activity (By similarity).</text>
</comment>
<comment type="domain">
    <molecule>Botulinum neurotoxin E heavy chain</molecule>
    <text evidence="2">Has 3 functional domains; the translocation domain (TD) and the receptor-binding domain (RBD) which is further subdivided into N- and C-terminal domains (N-RBD and C-RBD) (By similarity). In BoNT/E the domains are arranged differently than BoNT/A and BoNT/B; in BoNT/E the LC and RBD are on the same side of the TD and are in contact, whereas in BoNT/A and BoNT/B the LC is separated from the RBD by the TD (By similarity). The putative transmembrane region is closer to the receptor-binding regions in this toxin, which may explain why it acts faster than BoNT/A and BoNT/B (By similarity). The N-terminus of the TD wraps an extended belt around the perimeter of the LC, protecting Zn(2+) in the active site and may be a pseudosubstrate inhibitor which serves as an intramolecular chaperone for the LC prior to its translocation into the host cytosol (By similarity). The RBD binds transiently exposed coreceptors on the host presynaptic cell membrane (By similarity).</text>
</comment>
<comment type="miscellaneous">
    <text>There are seven antigenically distinct forms of botulinum neurotoxin: Types A, B, C, D, E, F, and G; new subtypes are quite frequent.</text>
</comment>
<comment type="miscellaneous">
    <text evidence="1">Botulism poisoning is usually food-borne, either by ingesting toxin or bacterial-contaminated food, or less frequently by inhalation poisoning. In both cases the neurotoxin binds to the apical surface of epithelial cells in the gut or airway. Toxin undergoes receptor-mediated endocytosis (using a different receptor than on target nerve cells), transcytosis across the epithelial cells and release into the general circulation. Once in the general circulation it binds to its target cells.</text>
</comment>
<comment type="miscellaneous">
    <text evidence="2 8">Unlike botulinum neurotoxin type A, type E is released from bacteria as a single chain and cleaved by host proteases into the active dichain (Probable).</text>
</comment>
<comment type="miscellaneous">
    <text evidence="2 4 5">Types A, B and E are the most frequent cause of adult human foodborne botulism; type A is the most severe, while type E has the shortest incubation period (By similarity). Type E neurotoxin from C.butyricum strains ATCC 43181, ATCC 43775 and BL6340 were all isolated from cases of human infant botulism (PubMed:1543481, PubMed:2033376).</text>
</comment>
<comment type="similarity">
    <text evidence="8">Belongs to the peptidase M27 family.</text>
</comment>
<comment type="online information" name="BotDB - A Database Resource for Clostridial Neurotoxins">
    <link uri="https://botdb.abcc.ncifcrf.gov/"/>
</comment>